<name>PDXA_ENTAG</name>
<reference key="1">
    <citation type="submission" date="1995-05" db="EMBL/GenBank/DDBJ databases">
        <authorList>
            <person name="Foor F."/>
        </authorList>
    </citation>
    <scope>NUCLEOTIDE SEQUENCE [GENOMIC DNA]</scope>
    <source>
        <strain>ATCC 21434 / AJ 2985</strain>
    </source>
</reference>
<evidence type="ECO:0000250" key="1"/>
<evidence type="ECO:0000305" key="2"/>
<comment type="function">
    <text evidence="1">Catalyzes the NAD(P)-dependent oxidation of 4-(phosphooxy)-L-threonine (HTP) into 2-amino-3-oxo-4-(phosphooxy)butyric acid which spontaneously decarboxylates to form 3-amino-2-oxopropyl phosphate (AHAP).</text>
</comment>
<comment type="catalytic activity">
    <reaction>
        <text>4-(phosphooxy)-L-threonine + NAD(+) = 3-amino-2-oxopropyl phosphate + CO2 + NADH</text>
        <dbReference type="Rhea" id="RHEA:32275"/>
        <dbReference type="ChEBI" id="CHEBI:16526"/>
        <dbReference type="ChEBI" id="CHEBI:57279"/>
        <dbReference type="ChEBI" id="CHEBI:57540"/>
        <dbReference type="ChEBI" id="CHEBI:57945"/>
        <dbReference type="ChEBI" id="CHEBI:58452"/>
        <dbReference type="EC" id="1.1.1.262"/>
    </reaction>
</comment>
<comment type="cofactor">
    <cofactor evidence="1">
        <name>Zn(2+)</name>
        <dbReference type="ChEBI" id="CHEBI:29105"/>
    </cofactor>
    <cofactor evidence="1">
        <name>Mg(2+)</name>
        <dbReference type="ChEBI" id="CHEBI:18420"/>
    </cofactor>
    <cofactor evidence="1">
        <name>Co(2+)</name>
        <dbReference type="ChEBI" id="CHEBI:48828"/>
    </cofactor>
    <text evidence="1">Binds 1 divalent metal cation per subunit. Can use ions such as Zn(2+), Mg(2+) or Co(2+).</text>
</comment>
<comment type="pathway">
    <text>Cofactor biosynthesis; pyridoxine 5'-phosphate biosynthesis; pyridoxine 5'-phosphate from D-erythrose 4-phosphate: step 4/5.</text>
</comment>
<comment type="subunit">
    <text evidence="1">Homodimer.</text>
</comment>
<comment type="subcellular location">
    <subcellularLocation>
        <location evidence="1">Cytoplasm</location>
    </subcellularLocation>
</comment>
<comment type="miscellaneous">
    <text evidence="1">The active site is located at the dimer interface.</text>
</comment>
<comment type="similarity">
    <text evidence="2">Belongs to the PdxA family.</text>
</comment>
<dbReference type="EC" id="1.1.1.262"/>
<dbReference type="EMBL" id="U25347">
    <property type="protein sequence ID" value="AAA66389.1"/>
    <property type="molecule type" value="Genomic_DNA"/>
</dbReference>
<dbReference type="SMR" id="Q47824"/>
<dbReference type="UniPathway" id="UPA00244">
    <property type="reaction ID" value="UER00312"/>
</dbReference>
<dbReference type="GO" id="GO:0005737">
    <property type="term" value="C:cytoplasm"/>
    <property type="evidence" value="ECO:0007669"/>
    <property type="project" value="UniProtKB-SubCell"/>
</dbReference>
<dbReference type="GO" id="GO:0050570">
    <property type="term" value="F:4-hydroxythreonine-4-phosphate dehydrogenase activity"/>
    <property type="evidence" value="ECO:0007669"/>
    <property type="project" value="UniProtKB-EC"/>
</dbReference>
<dbReference type="GO" id="GO:0046872">
    <property type="term" value="F:metal ion binding"/>
    <property type="evidence" value="ECO:0007669"/>
    <property type="project" value="UniProtKB-KW"/>
</dbReference>
<dbReference type="GO" id="GO:0051287">
    <property type="term" value="F:NAD binding"/>
    <property type="evidence" value="ECO:0007669"/>
    <property type="project" value="InterPro"/>
</dbReference>
<dbReference type="GO" id="GO:0008615">
    <property type="term" value="P:pyridoxine biosynthetic process"/>
    <property type="evidence" value="ECO:0007669"/>
    <property type="project" value="UniProtKB-KW"/>
</dbReference>
<dbReference type="Gene3D" id="3.40.718.10">
    <property type="entry name" value="Isopropylmalate Dehydrogenase"/>
    <property type="match status" value="1"/>
</dbReference>
<dbReference type="InterPro" id="IPR005255">
    <property type="entry name" value="PdxA_fam"/>
</dbReference>
<dbReference type="PANTHER" id="PTHR30004">
    <property type="entry name" value="4-HYDROXYTHREONINE-4-PHOSPHATE DEHYDROGENASE"/>
    <property type="match status" value="1"/>
</dbReference>
<dbReference type="PANTHER" id="PTHR30004:SF6">
    <property type="entry name" value="D-THREONATE 4-PHOSPHATE DEHYDROGENASE"/>
    <property type="match status" value="1"/>
</dbReference>
<dbReference type="Pfam" id="PF04166">
    <property type="entry name" value="PdxA"/>
    <property type="match status" value="1"/>
</dbReference>
<dbReference type="SUPFAM" id="SSF53659">
    <property type="entry name" value="Isocitrate/Isopropylmalate dehydrogenase-like"/>
    <property type="match status" value="1"/>
</dbReference>
<accession>Q47824</accession>
<organism>
    <name type="scientific">Enterobacter agglomerans</name>
    <name type="common">Erwinia herbicola</name>
    <name type="synonym">Pantoea agglomerans</name>
    <dbReference type="NCBI Taxonomy" id="549"/>
    <lineage>
        <taxon>Bacteria</taxon>
        <taxon>Pseudomonadati</taxon>
        <taxon>Pseudomonadota</taxon>
        <taxon>Gammaproteobacteria</taxon>
        <taxon>Enterobacterales</taxon>
        <taxon>Erwiniaceae</taxon>
        <taxon>Pantoea</taxon>
        <taxon>Pantoea agglomerans group</taxon>
    </lineage>
</organism>
<proteinExistence type="inferred from homology"/>
<protein>
    <recommendedName>
        <fullName>4-hydroxythreonine-4-phosphate dehydrogenase</fullName>
        <ecNumber>1.1.1.262</ecNumber>
    </recommendedName>
    <alternativeName>
        <fullName>4-(phosphohydroxy)-L-threonine dehydrogenase</fullName>
    </alternativeName>
</protein>
<feature type="chain" id="PRO_0000188807" description="4-hydroxythreonine-4-phosphate dehydrogenase">
    <location>
        <begin position="1" status="less than"/>
        <end position="105"/>
    </location>
</feature>
<feature type="binding site" evidence="1">
    <location>
        <position position="44"/>
    </location>
    <ligand>
        <name>a divalent metal cation</name>
        <dbReference type="ChEBI" id="CHEBI:60240"/>
        <note>ligand shared between dimeric partners</note>
    </ligand>
</feature>
<feature type="binding site" evidence="1">
    <location>
        <position position="52"/>
    </location>
    <ligand>
        <name>substrate</name>
    </ligand>
</feature>
<feature type="binding site" evidence="1">
    <location>
        <position position="61"/>
    </location>
    <ligand>
        <name>substrate</name>
    </ligand>
</feature>
<feature type="binding site" evidence="1">
    <location>
        <position position="70"/>
    </location>
    <ligand>
        <name>substrate</name>
    </ligand>
</feature>
<feature type="non-terminal residue">
    <location>
        <position position="1"/>
    </location>
</feature>
<sequence length="105" mass="11551">IRILTPAVEAMKAQGMDVYGPCPPDTVFMQCNEDMYDIVVAMYHDQGHIPLKLLGFYDGVNITAGLPFLRTSADHGTAFNIAWTGKANPESMAISIDMAMKITRE</sequence>
<keyword id="KW-0170">Cobalt</keyword>
<keyword id="KW-0963">Cytoplasm</keyword>
<keyword id="KW-0460">Magnesium</keyword>
<keyword id="KW-0479">Metal-binding</keyword>
<keyword id="KW-0520">NAD</keyword>
<keyword id="KW-0521">NADP</keyword>
<keyword id="KW-0560">Oxidoreductase</keyword>
<keyword id="KW-0664">Pyridoxine biosynthesis</keyword>
<keyword id="KW-0862">Zinc</keyword>
<gene>
    <name type="primary">pdxA</name>
</gene>